<organism>
    <name type="scientific">Coxiella burnetii (strain CbuK_Q154)</name>
    <name type="common">Coxiella burnetii (strain Q154)</name>
    <dbReference type="NCBI Taxonomy" id="434924"/>
    <lineage>
        <taxon>Bacteria</taxon>
        <taxon>Pseudomonadati</taxon>
        <taxon>Pseudomonadota</taxon>
        <taxon>Gammaproteobacteria</taxon>
        <taxon>Legionellales</taxon>
        <taxon>Coxiellaceae</taxon>
        <taxon>Coxiella</taxon>
    </lineage>
</organism>
<accession>B6J7L9</accession>
<proteinExistence type="inferred from homology"/>
<protein>
    <recommendedName>
        <fullName evidence="1">S-adenosylmethionine:tRNA ribosyltransferase-isomerase</fullName>
        <ecNumber evidence="1">2.4.99.17</ecNumber>
    </recommendedName>
    <alternativeName>
        <fullName evidence="1">Queuosine biosynthesis protein QueA</fullName>
    </alternativeName>
</protein>
<name>QUEA_COXB1</name>
<keyword id="KW-0963">Cytoplasm</keyword>
<keyword id="KW-0671">Queuosine biosynthesis</keyword>
<keyword id="KW-0949">S-adenosyl-L-methionine</keyword>
<keyword id="KW-0808">Transferase</keyword>
<evidence type="ECO:0000255" key="1">
    <source>
        <dbReference type="HAMAP-Rule" id="MF_00113"/>
    </source>
</evidence>
<feature type="chain" id="PRO_1000094769" description="S-adenosylmethionine:tRNA ribosyltransferase-isomerase">
    <location>
        <begin position="1"/>
        <end position="343"/>
    </location>
</feature>
<gene>
    <name evidence="1" type="primary">queA</name>
    <name type="ordered locus">CbuK_1065</name>
</gene>
<comment type="function">
    <text evidence="1">Transfers and isomerizes the ribose moiety from AdoMet to the 7-aminomethyl group of 7-deazaguanine (preQ1-tRNA) to give epoxyqueuosine (oQ-tRNA).</text>
</comment>
<comment type="catalytic activity">
    <reaction evidence="1">
        <text>7-aminomethyl-7-carbaguanosine(34) in tRNA + S-adenosyl-L-methionine = epoxyqueuosine(34) in tRNA + adenine + L-methionine + 2 H(+)</text>
        <dbReference type="Rhea" id="RHEA:32155"/>
        <dbReference type="Rhea" id="RHEA-COMP:10342"/>
        <dbReference type="Rhea" id="RHEA-COMP:18582"/>
        <dbReference type="ChEBI" id="CHEBI:15378"/>
        <dbReference type="ChEBI" id="CHEBI:16708"/>
        <dbReference type="ChEBI" id="CHEBI:57844"/>
        <dbReference type="ChEBI" id="CHEBI:59789"/>
        <dbReference type="ChEBI" id="CHEBI:82833"/>
        <dbReference type="ChEBI" id="CHEBI:194443"/>
        <dbReference type="EC" id="2.4.99.17"/>
    </reaction>
</comment>
<comment type="pathway">
    <text evidence="1">tRNA modification; tRNA-queuosine biosynthesis.</text>
</comment>
<comment type="subunit">
    <text evidence="1">Monomer.</text>
</comment>
<comment type="subcellular location">
    <subcellularLocation>
        <location evidence="1">Cytoplasm</location>
    </subcellularLocation>
</comment>
<comment type="similarity">
    <text evidence="1">Belongs to the QueA family.</text>
</comment>
<sequence length="343" mass="38751">MKNQWKTSDFDYNLPVELIAQRPLADRSGSRLLYIDRSRRTVSHRQFNGFVEQVKPNDLVVLNDTKVIPARLFGHKQTGGKVECLVERILSKDRFLAHIRASKAPKLGSQIIIADNFKIIIEGRYNDLFECVLHSSASILDLLYQHGRIPLPPYIQREPDKDDQARYQTIFAERAGAVAAPTAGLHFNEETFDALRKKGAAITYVTLHVGAGTFQPVRADSLADHRMHHEWMEVSKAVCDAIAKCRKNNGRVIAVGTTVMRCLETATKNGECRPYAGETDLFIYPGFQFNCVDALLTNFHLPKSTLLMLVCAFGGYELVMEAYQKAVENRYRFFSYGDAMLIS</sequence>
<reference key="1">
    <citation type="journal article" date="2009" name="Infect. Immun.">
        <title>Comparative genomics reveal extensive transposon-mediated genomic plasticity and diversity among potential effector proteins within the genus Coxiella.</title>
        <authorList>
            <person name="Beare P.A."/>
            <person name="Unsworth N."/>
            <person name="Andoh M."/>
            <person name="Voth D.E."/>
            <person name="Omsland A."/>
            <person name="Gilk S.D."/>
            <person name="Williams K.P."/>
            <person name="Sobral B.W."/>
            <person name="Kupko J.J. III"/>
            <person name="Porcella S.F."/>
            <person name="Samuel J.E."/>
            <person name="Heinzen R.A."/>
        </authorList>
    </citation>
    <scope>NUCLEOTIDE SEQUENCE [LARGE SCALE GENOMIC DNA]</scope>
    <source>
        <strain>CbuK_Q154</strain>
    </source>
</reference>
<dbReference type="EC" id="2.4.99.17" evidence="1"/>
<dbReference type="EMBL" id="CP001020">
    <property type="protein sequence ID" value="ACJ20268.1"/>
    <property type="molecule type" value="Genomic_DNA"/>
</dbReference>
<dbReference type="RefSeq" id="WP_005770726.1">
    <property type="nucleotide sequence ID" value="NC_011528.1"/>
</dbReference>
<dbReference type="SMR" id="B6J7L9"/>
<dbReference type="KEGG" id="cbc:CbuK_1065"/>
<dbReference type="HOGENOM" id="CLU_039110_1_0_6"/>
<dbReference type="UniPathway" id="UPA00392"/>
<dbReference type="GO" id="GO:0005737">
    <property type="term" value="C:cytoplasm"/>
    <property type="evidence" value="ECO:0007669"/>
    <property type="project" value="UniProtKB-SubCell"/>
</dbReference>
<dbReference type="GO" id="GO:0051075">
    <property type="term" value="F:S-adenosylmethionine:tRNA ribosyltransferase-isomerase activity"/>
    <property type="evidence" value="ECO:0007669"/>
    <property type="project" value="UniProtKB-EC"/>
</dbReference>
<dbReference type="GO" id="GO:0008616">
    <property type="term" value="P:queuosine biosynthetic process"/>
    <property type="evidence" value="ECO:0007669"/>
    <property type="project" value="UniProtKB-UniRule"/>
</dbReference>
<dbReference type="GO" id="GO:0002099">
    <property type="term" value="P:tRNA wobble guanine modification"/>
    <property type="evidence" value="ECO:0007669"/>
    <property type="project" value="TreeGrafter"/>
</dbReference>
<dbReference type="FunFam" id="3.40.1780.10:FF:000001">
    <property type="entry name" value="S-adenosylmethionine:tRNA ribosyltransferase-isomerase"/>
    <property type="match status" value="1"/>
</dbReference>
<dbReference type="Gene3D" id="2.40.10.240">
    <property type="entry name" value="QueA-like"/>
    <property type="match status" value="1"/>
</dbReference>
<dbReference type="Gene3D" id="3.40.1780.10">
    <property type="entry name" value="QueA-like"/>
    <property type="match status" value="1"/>
</dbReference>
<dbReference type="HAMAP" id="MF_00113">
    <property type="entry name" value="QueA"/>
    <property type="match status" value="1"/>
</dbReference>
<dbReference type="InterPro" id="IPR003699">
    <property type="entry name" value="QueA"/>
</dbReference>
<dbReference type="InterPro" id="IPR042118">
    <property type="entry name" value="QueA_dom1"/>
</dbReference>
<dbReference type="InterPro" id="IPR042119">
    <property type="entry name" value="QueA_dom2"/>
</dbReference>
<dbReference type="InterPro" id="IPR036100">
    <property type="entry name" value="QueA_sf"/>
</dbReference>
<dbReference type="NCBIfam" id="NF001140">
    <property type="entry name" value="PRK00147.1"/>
    <property type="match status" value="1"/>
</dbReference>
<dbReference type="NCBIfam" id="TIGR00113">
    <property type="entry name" value="queA"/>
    <property type="match status" value="1"/>
</dbReference>
<dbReference type="PANTHER" id="PTHR30307">
    <property type="entry name" value="S-ADENOSYLMETHIONINE:TRNA RIBOSYLTRANSFERASE-ISOMERASE"/>
    <property type="match status" value="1"/>
</dbReference>
<dbReference type="PANTHER" id="PTHR30307:SF0">
    <property type="entry name" value="S-ADENOSYLMETHIONINE:TRNA RIBOSYLTRANSFERASE-ISOMERASE"/>
    <property type="match status" value="1"/>
</dbReference>
<dbReference type="Pfam" id="PF02547">
    <property type="entry name" value="Queuosine_synth"/>
    <property type="match status" value="1"/>
</dbReference>
<dbReference type="SUPFAM" id="SSF111337">
    <property type="entry name" value="QueA-like"/>
    <property type="match status" value="1"/>
</dbReference>